<name>RS17_RICPU</name>
<organism>
    <name type="scientific">Rickettsia peacockii (strain Rustic)</name>
    <dbReference type="NCBI Taxonomy" id="562019"/>
    <lineage>
        <taxon>Bacteria</taxon>
        <taxon>Pseudomonadati</taxon>
        <taxon>Pseudomonadota</taxon>
        <taxon>Alphaproteobacteria</taxon>
        <taxon>Rickettsiales</taxon>
        <taxon>Rickettsiaceae</taxon>
        <taxon>Rickettsieae</taxon>
        <taxon>Rickettsia</taxon>
        <taxon>spotted fever group</taxon>
    </lineage>
</organism>
<reference key="1">
    <citation type="journal article" date="2009" name="PLoS ONE">
        <title>Genome sequence of the endosymbiont Rickettsia peacockii and comparison with virulent Rickettsia rickettsii: identification of virulence factors.</title>
        <authorList>
            <person name="Felsheim R.F."/>
            <person name="Kurtti T.J."/>
            <person name="Munderloh U.G."/>
        </authorList>
    </citation>
    <scope>NUCLEOTIDE SEQUENCE [LARGE SCALE GENOMIC DNA]</scope>
    <source>
        <strain>Rustic</strain>
    </source>
</reference>
<gene>
    <name evidence="1" type="primary">rpsQ</name>
    <name type="ordered locus">RPR_06185</name>
</gene>
<dbReference type="EMBL" id="CP001227">
    <property type="protein sequence ID" value="ACR47767.1"/>
    <property type="molecule type" value="Genomic_DNA"/>
</dbReference>
<dbReference type="RefSeq" id="WP_004997812.1">
    <property type="nucleotide sequence ID" value="NC_012730.1"/>
</dbReference>
<dbReference type="SMR" id="C4K2H0"/>
<dbReference type="GeneID" id="95361477"/>
<dbReference type="KEGG" id="rpk:RPR_06185"/>
<dbReference type="HOGENOM" id="CLU_073626_1_1_5"/>
<dbReference type="Proteomes" id="UP000005015">
    <property type="component" value="Chromosome"/>
</dbReference>
<dbReference type="GO" id="GO:0022627">
    <property type="term" value="C:cytosolic small ribosomal subunit"/>
    <property type="evidence" value="ECO:0007669"/>
    <property type="project" value="TreeGrafter"/>
</dbReference>
<dbReference type="GO" id="GO:0019843">
    <property type="term" value="F:rRNA binding"/>
    <property type="evidence" value="ECO:0007669"/>
    <property type="project" value="UniProtKB-UniRule"/>
</dbReference>
<dbReference type="GO" id="GO:0003735">
    <property type="term" value="F:structural constituent of ribosome"/>
    <property type="evidence" value="ECO:0007669"/>
    <property type="project" value="InterPro"/>
</dbReference>
<dbReference type="GO" id="GO:0006412">
    <property type="term" value="P:translation"/>
    <property type="evidence" value="ECO:0007669"/>
    <property type="project" value="UniProtKB-UniRule"/>
</dbReference>
<dbReference type="CDD" id="cd00364">
    <property type="entry name" value="Ribosomal_uS17"/>
    <property type="match status" value="1"/>
</dbReference>
<dbReference type="Gene3D" id="2.40.50.140">
    <property type="entry name" value="Nucleic acid-binding proteins"/>
    <property type="match status" value="1"/>
</dbReference>
<dbReference type="HAMAP" id="MF_01345_B">
    <property type="entry name" value="Ribosomal_uS17_B"/>
    <property type="match status" value="1"/>
</dbReference>
<dbReference type="InterPro" id="IPR012340">
    <property type="entry name" value="NA-bd_OB-fold"/>
</dbReference>
<dbReference type="InterPro" id="IPR000266">
    <property type="entry name" value="Ribosomal_uS17"/>
</dbReference>
<dbReference type="InterPro" id="IPR019984">
    <property type="entry name" value="Ribosomal_uS17_bact/chlr"/>
</dbReference>
<dbReference type="InterPro" id="IPR019979">
    <property type="entry name" value="Ribosomal_uS17_CS"/>
</dbReference>
<dbReference type="NCBIfam" id="NF004123">
    <property type="entry name" value="PRK05610.1"/>
    <property type="match status" value="1"/>
</dbReference>
<dbReference type="NCBIfam" id="TIGR03635">
    <property type="entry name" value="uS17_bact"/>
    <property type="match status" value="1"/>
</dbReference>
<dbReference type="PANTHER" id="PTHR10744">
    <property type="entry name" value="40S RIBOSOMAL PROTEIN S11 FAMILY MEMBER"/>
    <property type="match status" value="1"/>
</dbReference>
<dbReference type="PANTHER" id="PTHR10744:SF1">
    <property type="entry name" value="SMALL RIBOSOMAL SUBUNIT PROTEIN US17M"/>
    <property type="match status" value="1"/>
</dbReference>
<dbReference type="Pfam" id="PF00366">
    <property type="entry name" value="Ribosomal_S17"/>
    <property type="match status" value="1"/>
</dbReference>
<dbReference type="PRINTS" id="PR00973">
    <property type="entry name" value="RIBOSOMALS17"/>
</dbReference>
<dbReference type="SUPFAM" id="SSF50249">
    <property type="entry name" value="Nucleic acid-binding proteins"/>
    <property type="match status" value="1"/>
</dbReference>
<dbReference type="PROSITE" id="PS00056">
    <property type="entry name" value="RIBOSOMAL_S17"/>
    <property type="match status" value="1"/>
</dbReference>
<accession>C4K2H0</accession>
<evidence type="ECO:0000255" key="1">
    <source>
        <dbReference type="HAMAP-Rule" id="MF_01345"/>
    </source>
</evidence>
<evidence type="ECO:0000305" key="2"/>
<protein>
    <recommendedName>
        <fullName evidence="1">Small ribosomal subunit protein uS17</fullName>
    </recommendedName>
    <alternativeName>
        <fullName evidence="2">30S ribosomal protein S17</fullName>
    </alternativeName>
</protein>
<sequence>MPKRVLQGVVISSKADKTVTVKVERKFKHPIYKKFVKVSKKYAAHDSENKYQEGDKVSIIESRPISKTKTWVVVNGE</sequence>
<feature type="chain" id="PRO_1000214797" description="Small ribosomal subunit protein uS17">
    <location>
        <begin position="1"/>
        <end position="77"/>
    </location>
</feature>
<keyword id="KW-0687">Ribonucleoprotein</keyword>
<keyword id="KW-0689">Ribosomal protein</keyword>
<keyword id="KW-0694">RNA-binding</keyword>
<keyword id="KW-0699">rRNA-binding</keyword>
<proteinExistence type="inferred from homology"/>
<comment type="function">
    <text evidence="1">One of the primary rRNA binding proteins, it binds specifically to the 5'-end of 16S ribosomal RNA.</text>
</comment>
<comment type="subunit">
    <text evidence="1">Part of the 30S ribosomal subunit.</text>
</comment>
<comment type="similarity">
    <text evidence="1">Belongs to the universal ribosomal protein uS17 family.</text>
</comment>